<gene>
    <name evidence="1" type="primary">rpmE</name>
    <name type="ordered locus">BAD_0440</name>
</gene>
<feature type="chain" id="PRO_1000126568" description="Large ribosomal subunit protein bL31">
    <location>
        <begin position="1"/>
        <end position="70"/>
    </location>
</feature>
<feature type="binding site" evidence="1">
    <location>
        <position position="16"/>
    </location>
    <ligand>
        <name>Zn(2+)</name>
        <dbReference type="ChEBI" id="CHEBI:29105"/>
    </ligand>
</feature>
<feature type="binding site" evidence="1">
    <location>
        <position position="18"/>
    </location>
    <ligand>
        <name>Zn(2+)</name>
        <dbReference type="ChEBI" id="CHEBI:29105"/>
    </ligand>
</feature>
<feature type="binding site" evidence="1">
    <location>
        <position position="38"/>
    </location>
    <ligand>
        <name>Zn(2+)</name>
        <dbReference type="ChEBI" id="CHEBI:29105"/>
    </ligand>
</feature>
<feature type="binding site" evidence="1">
    <location>
        <position position="41"/>
    </location>
    <ligand>
        <name>Zn(2+)</name>
        <dbReference type="ChEBI" id="CHEBI:29105"/>
    </ligand>
</feature>
<proteinExistence type="inferred from homology"/>
<accession>A1A0I8</accession>
<keyword id="KW-0479">Metal-binding</keyword>
<keyword id="KW-1185">Reference proteome</keyword>
<keyword id="KW-0687">Ribonucleoprotein</keyword>
<keyword id="KW-0689">Ribosomal protein</keyword>
<keyword id="KW-0694">RNA-binding</keyword>
<keyword id="KW-0699">rRNA-binding</keyword>
<keyword id="KW-0862">Zinc</keyword>
<name>RL31_BIFAA</name>
<protein>
    <recommendedName>
        <fullName evidence="1">Large ribosomal subunit protein bL31</fullName>
    </recommendedName>
    <alternativeName>
        <fullName evidence="2">50S ribosomal protein L31</fullName>
    </alternativeName>
</protein>
<evidence type="ECO:0000255" key="1">
    <source>
        <dbReference type="HAMAP-Rule" id="MF_00501"/>
    </source>
</evidence>
<evidence type="ECO:0000305" key="2"/>
<dbReference type="EMBL" id="AP009256">
    <property type="protein sequence ID" value="BAF39221.1"/>
    <property type="molecule type" value="Genomic_DNA"/>
</dbReference>
<dbReference type="RefSeq" id="WP_003808371.1">
    <property type="nucleotide sequence ID" value="NZ_CAXVNC010000001.1"/>
</dbReference>
<dbReference type="SMR" id="A1A0I8"/>
<dbReference type="STRING" id="367928.BAD_0440"/>
<dbReference type="PaxDb" id="1680-BADO_0455"/>
<dbReference type="GeneID" id="45582336"/>
<dbReference type="KEGG" id="bad:BAD_0440"/>
<dbReference type="HOGENOM" id="CLU_114306_4_3_11"/>
<dbReference type="Proteomes" id="UP000008702">
    <property type="component" value="Chromosome"/>
</dbReference>
<dbReference type="GO" id="GO:1990904">
    <property type="term" value="C:ribonucleoprotein complex"/>
    <property type="evidence" value="ECO:0007669"/>
    <property type="project" value="UniProtKB-KW"/>
</dbReference>
<dbReference type="GO" id="GO:0005840">
    <property type="term" value="C:ribosome"/>
    <property type="evidence" value="ECO:0007669"/>
    <property type="project" value="UniProtKB-KW"/>
</dbReference>
<dbReference type="GO" id="GO:0046872">
    <property type="term" value="F:metal ion binding"/>
    <property type="evidence" value="ECO:0007669"/>
    <property type="project" value="UniProtKB-KW"/>
</dbReference>
<dbReference type="GO" id="GO:0019843">
    <property type="term" value="F:rRNA binding"/>
    <property type="evidence" value="ECO:0007669"/>
    <property type="project" value="UniProtKB-KW"/>
</dbReference>
<dbReference type="GO" id="GO:0003735">
    <property type="term" value="F:structural constituent of ribosome"/>
    <property type="evidence" value="ECO:0007669"/>
    <property type="project" value="InterPro"/>
</dbReference>
<dbReference type="GO" id="GO:0006412">
    <property type="term" value="P:translation"/>
    <property type="evidence" value="ECO:0007669"/>
    <property type="project" value="UniProtKB-UniRule"/>
</dbReference>
<dbReference type="Gene3D" id="4.10.830.30">
    <property type="entry name" value="Ribosomal protein L31"/>
    <property type="match status" value="1"/>
</dbReference>
<dbReference type="HAMAP" id="MF_00501">
    <property type="entry name" value="Ribosomal_bL31_1"/>
    <property type="match status" value="1"/>
</dbReference>
<dbReference type="InterPro" id="IPR034704">
    <property type="entry name" value="Ribosomal_bL28/bL31-like_sf"/>
</dbReference>
<dbReference type="InterPro" id="IPR002150">
    <property type="entry name" value="Ribosomal_bL31"/>
</dbReference>
<dbReference type="InterPro" id="IPR027491">
    <property type="entry name" value="Ribosomal_bL31_A"/>
</dbReference>
<dbReference type="InterPro" id="IPR042105">
    <property type="entry name" value="Ribosomal_bL31_sf"/>
</dbReference>
<dbReference type="NCBIfam" id="TIGR00105">
    <property type="entry name" value="L31"/>
    <property type="match status" value="1"/>
</dbReference>
<dbReference type="NCBIfam" id="NF000612">
    <property type="entry name" value="PRK00019.1"/>
    <property type="match status" value="1"/>
</dbReference>
<dbReference type="NCBIfam" id="NF001809">
    <property type="entry name" value="PRK00528.1"/>
    <property type="match status" value="1"/>
</dbReference>
<dbReference type="PANTHER" id="PTHR33280">
    <property type="entry name" value="50S RIBOSOMAL PROTEIN L31, CHLOROPLASTIC"/>
    <property type="match status" value="1"/>
</dbReference>
<dbReference type="PANTHER" id="PTHR33280:SF1">
    <property type="entry name" value="LARGE RIBOSOMAL SUBUNIT PROTEIN BL31C"/>
    <property type="match status" value="1"/>
</dbReference>
<dbReference type="Pfam" id="PF01197">
    <property type="entry name" value="Ribosomal_L31"/>
    <property type="match status" value="1"/>
</dbReference>
<dbReference type="PRINTS" id="PR01249">
    <property type="entry name" value="RIBOSOMALL31"/>
</dbReference>
<dbReference type="SUPFAM" id="SSF143800">
    <property type="entry name" value="L28p-like"/>
    <property type="match status" value="1"/>
</dbReference>
<dbReference type="PROSITE" id="PS01143">
    <property type="entry name" value="RIBOSOMAL_L31"/>
    <property type="match status" value="1"/>
</dbReference>
<reference key="1">
    <citation type="submission" date="2006-12" db="EMBL/GenBank/DDBJ databases">
        <title>Bifidobacterium adolescentis complete genome sequence.</title>
        <authorList>
            <person name="Suzuki T."/>
            <person name="Tsuda Y."/>
            <person name="Kanou N."/>
            <person name="Inoue T."/>
            <person name="Kumazaki K."/>
            <person name="Nagano S."/>
            <person name="Hirai S."/>
            <person name="Tanaka K."/>
            <person name="Watanabe K."/>
        </authorList>
    </citation>
    <scope>NUCLEOTIDE SEQUENCE [LARGE SCALE GENOMIC DNA]</scope>
    <source>
        <strain>ATCC 15703 / DSM 20083 / NCTC 11814 / E194a</strain>
    </source>
</reference>
<comment type="function">
    <text evidence="1">Binds the 23S rRNA.</text>
</comment>
<comment type="cofactor">
    <cofactor evidence="1">
        <name>Zn(2+)</name>
        <dbReference type="ChEBI" id="CHEBI:29105"/>
    </cofactor>
    <text evidence="1">Binds 1 zinc ion per subunit.</text>
</comment>
<comment type="subunit">
    <text evidence="1">Part of the 50S ribosomal subunit.</text>
</comment>
<comment type="similarity">
    <text evidence="1">Belongs to the bacterial ribosomal protein bL31 family. Type A subfamily.</text>
</comment>
<organism>
    <name type="scientific">Bifidobacterium adolescentis (strain ATCC 15703 / DSM 20083 / NCTC 11814 / E194a)</name>
    <dbReference type="NCBI Taxonomy" id="367928"/>
    <lineage>
        <taxon>Bacteria</taxon>
        <taxon>Bacillati</taxon>
        <taxon>Actinomycetota</taxon>
        <taxon>Actinomycetes</taxon>
        <taxon>Bifidobacteriales</taxon>
        <taxon>Bifidobacteriaceae</taxon>
        <taxon>Bifidobacterium</taxon>
    </lineage>
</organism>
<sequence length="70" mass="7884">MKQGIHPDYHAVQVTCSCGNTFVTRSTYNGDHMTVDVCSNCHPFYTGKQKILDTGGRVARFEKRYGKKAK</sequence>